<organism>
    <name type="scientific">Homo sapiens</name>
    <name type="common">Human</name>
    <dbReference type="NCBI Taxonomy" id="9606"/>
    <lineage>
        <taxon>Eukaryota</taxon>
        <taxon>Metazoa</taxon>
        <taxon>Chordata</taxon>
        <taxon>Craniata</taxon>
        <taxon>Vertebrata</taxon>
        <taxon>Euteleostomi</taxon>
        <taxon>Mammalia</taxon>
        <taxon>Eutheria</taxon>
        <taxon>Euarchontoglires</taxon>
        <taxon>Primates</taxon>
        <taxon>Haplorrhini</taxon>
        <taxon>Catarrhini</taxon>
        <taxon>Hominidae</taxon>
        <taxon>Homo</taxon>
    </lineage>
</organism>
<gene>
    <name type="primary">SERPINB7</name>
</gene>
<name>SPB7_HUMAN</name>
<accession>O75635</accession>
<accession>B4DUW8</accession>
<accession>F5GZC0</accession>
<accession>Q1ED45</accession>
<accession>Q3KPG4</accession>
<feature type="chain" id="PRO_0000094108" description="Serpin B7">
    <location>
        <begin position="1"/>
        <end position="380"/>
    </location>
</feature>
<feature type="site" description="Reactive bond" evidence="1">
    <location>
        <begin position="347"/>
        <end position="348"/>
    </location>
</feature>
<feature type="modified residue" description="Phosphoserine" evidence="5">
    <location>
        <position position="217"/>
    </location>
</feature>
<feature type="modified residue" description="Phosphoserine" evidence="5">
    <location>
        <position position="223"/>
    </location>
</feature>
<feature type="splice variant" id="VSP_044711" description="In isoform 2." evidence="3">
    <location>
        <begin position="57"/>
        <end position="73"/>
    </location>
</feature>
<feature type="sequence variant" id="VAR_034512" description="In dbSNP:rs17782413.">
    <original>R</original>
    <variation>Q</variation>
    <location>
        <position position="266"/>
    </location>
</feature>
<feature type="sequence conflict" description="In Ref. 3; BAG62480." evidence="4" ref="3">
    <original>K</original>
    <variation>E</variation>
    <location>
        <position position="155"/>
    </location>
</feature>
<evidence type="ECO:0000250" key="1"/>
<evidence type="ECO:0000269" key="2">
    <source>
    </source>
</evidence>
<evidence type="ECO:0000303" key="3">
    <source>
    </source>
</evidence>
<evidence type="ECO:0000305" key="4"/>
<evidence type="ECO:0007744" key="5">
    <source>
    </source>
</evidence>
<keyword id="KW-0025">Alternative splicing</keyword>
<keyword id="KW-0963">Cytoplasm</keyword>
<keyword id="KW-1007">Palmoplantar keratoderma</keyword>
<keyword id="KW-0597">Phosphoprotein</keyword>
<keyword id="KW-0646">Protease inhibitor</keyword>
<keyword id="KW-1267">Proteomics identification</keyword>
<keyword id="KW-1185">Reference proteome</keyword>
<keyword id="KW-0722">Serine protease inhibitor</keyword>
<protein>
    <recommendedName>
        <fullName>Serpin B7</fullName>
    </recommendedName>
    <alternativeName>
        <fullName>Megsin</fullName>
    </alternativeName>
    <alternativeName>
        <fullName>TP55</fullName>
    </alternativeName>
</protein>
<reference key="1">
    <citation type="journal article" date="1997" name="J. Biol. Chem.">
        <title>Purification, cDNA cloning, and characterization of a new serpin with megakaryocyte maturation activity.</title>
        <authorList>
            <person name="Tsujimoto M."/>
            <person name="Tsuruoka N."/>
            <person name="Ishida N."/>
            <person name="Kurihara T."/>
            <person name="Iwasa F."/>
            <person name="Yamashiro K."/>
            <person name="Rogi T."/>
            <person name="Kodama S."/>
            <person name="Katsuragi N."/>
            <person name="Adachi M."/>
            <person name="Katayama T."/>
            <person name="Nakao M."/>
            <person name="Yamaichi K."/>
            <person name="Hashino J."/>
            <person name="Haruyama M."/>
            <person name="Miura K."/>
            <person name="Nakanishi T."/>
            <person name="Nakazato H."/>
            <person name="Teramura M."/>
            <person name="Mizoguchi H."/>
            <person name="Yamaguchi N."/>
        </authorList>
    </citation>
    <scope>NUCLEOTIDE SEQUENCE [MRNA] (ISOFORM 1)</scope>
</reference>
<reference key="2">
    <citation type="journal article" date="1998" name="J. Clin. Invest.">
        <title>A mesangium-predominant gene, megsin, is a new serpin upregulated in IgA nephropathy.</title>
        <authorList>
            <person name="Miyata T."/>
            <person name="Nangaku M."/>
            <person name="Suzuki D."/>
            <person name="Inagi R."/>
            <person name="Uragami K."/>
            <person name="Sakai H."/>
            <person name="Okubo K."/>
            <person name="Kurokawa K."/>
        </authorList>
    </citation>
    <scope>NUCLEOTIDE SEQUENCE [MRNA] (ISOFORM 1)</scope>
    <source>
        <tissue>Mesangial cell</tissue>
    </source>
</reference>
<reference key="3">
    <citation type="journal article" date="2004" name="Nat. Genet.">
        <title>Complete sequencing and characterization of 21,243 full-length human cDNAs.</title>
        <authorList>
            <person name="Ota T."/>
            <person name="Suzuki Y."/>
            <person name="Nishikawa T."/>
            <person name="Otsuki T."/>
            <person name="Sugiyama T."/>
            <person name="Irie R."/>
            <person name="Wakamatsu A."/>
            <person name="Hayashi K."/>
            <person name="Sato H."/>
            <person name="Nagai K."/>
            <person name="Kimura K."/>
            <person name="Makita H."/>
            <person name="Sekine M."/>
            <person name="Obayashi M."/>
            <person name="Nishi T."/>
            <person name="Shibahara T."/>
            <person name="Tanaka T."/>
            <person name="Ishii S."/>
            <person name="Yamamoto J."/>
            <person name="Saito K."/>
            <person name="Kawai Y."/>
            <person name="Isono Y."/>
            <person name="Nakamura Y."/>
            <person name="Nagahari K."/>
            <person name="Murakami K."/>
            <person name="Yasuda T."/>
            <person name="Iwayanagi T."/>
            <person name="Wagatsuma M."/>
            <person name="Shiratori A."/>
            <person name="Sudo H."/>
            <person name="Hosoiri T."/>
            <person name="Kaku Y."/>
            <person name="Kodaira H."/>
            <person name="Kondo H."/>
            <person name="Sugawara M."/>
            <person name="Takahashi M."/>
            <person name="Kanda K."/>
            <person name="Yokoi T."/>
            <person name="Furuya T."/>
            <person name="Kikkawa E."/>
            <person name="Omura Y."/>
            <person name="Abe K."/>
            <person name="Kamihara K."/>
            <person name="Katsuta N."/>
            <person name="Sato K."/>
            <person name="Tanikawa M."/>
            <person name="Yamazaki M."/>
            <person name="Ninomiya K."/>
            <person name="Ishibashi T."/>
            <person name="Yamashita H."/>
            <person name="Murakawa K."/>
            <person name="Fujimori K."/>
            <person name="Tanai H."/>
            <person name="Kimata M."/>
            <person name="Watanabe M."/>
            <person name="Hiraoka S."/>
            <person name="Chiba Y."/>
            <person name="Ishida S."/>
            <person name="Ono Y."/>
            <person name="Takiguchi S."/>
            <person name="Watanabe S."/>
            <person name="Yosida M."/>
            <person name="Hotuta T."/>
            <person name="Kusano J."/>
            <person name="Kanehori K."/>
            <person name="Takahashi-Fujii A."/>
            <person name="Hara H."/>
            <person name="Tanase T.-O."/>
            <person name="Nomura Y."/>
            <person name="Togiya S."/>
            <person name="Komai F."/>
            <person name="Hara R."/>
            <person name="Takeuchi K."/>
            <person name="Arita M."/>
            <person name="Imose N."/>
            <person name="Musashino K."/>
            <person name="Yuuki H."/>
            <person name="Oshima A."/>
            <person name="Sasaki N."/>
            <person name="Aotsuka S."/>
            <person name="Yoshikawa Y."/>
            <person name="Matsunawa H."/>
            <person name="Ichihara T."/>
            <person name="Shiohata N."/>
            <person name="Sano S."/>
            <person name="Moriya S."/>
            <person name="Momiyama H."/>
            <person name="Satoh N."/>
            <person name="Takami S."/>
            <person name="Terashima Y."/>
            <person name="Suzuki O."/>
            <person name="Nakagawa S."/>
            <person name="Senoh A."/>
            <person name="Mizoguchi H."/>
            <person name="Goto Y."/>
            <person name="Shimizu F."/>
            <person name="Wakebe H."/>
            <person name="Hishigaki H."/>
            <person name="Watanabe T."/>
            <person name="Sugiyama A."/>
            <person name="Takemoto M."/>
            <person name="Kawakami B."/>
            <person name="Yamazaki M."/>
            <person name="Watanabe K."/>
            <person name="Kumagai A."/>
            <person name="Itakura S."/>
            <person name="Fukuzumi Y."/>
            <person name="Fujimori Y."/>
            <person name="Komiyama M."/>
            <person name="Tashiro H."/>
            <person name="Tanigami A."/>
            <person name="Fujiwara T."/>
            <person name="Ono T."/>
            <person name="Yamada K."/>
            <person name="Fujii Y."/>
            <person name="Ozaki K."/>
            <person name="Hirao M."/>
            <person name="Ohmori Y."/>
            <person name="Kawabata A."/>
            <person name="Hikiji T."/>
            <person name="Kobatake N."/>
            <person name="Inagaki H."/>
            <person name="Ikema Y."/>
            <person name="Okamoto S."/>
            <person name="Okitani R."/>
            <person name="Kawakami T."/>
            <person name="Noguchi S."/>
            <person name="Itoh T."/>
            <person name="Shigeta K."/>
            <person name="Senba T."/>
            <person name="Matsumura K."/>
            <person name="Nakajima Y."/>
            <person name="Mizuno T."/>
            <person name="Morinaga M."/>
            <person name="Sasaki M."/>
            <person name="Togashi T."/>
            <person name="Oyama M."/>
            <person name="Hata H."/>
            <person name="Watanabe M."/>
            <person name="Komatsu T."/>
            <person name="Mizushima-Sugano J."/>
            <person name="Satoh T."/>
            <person name="Shirai Y."/>
            <person name="Takahashi Y."/>
            <person name="Nakagawa K."/>
            <person name="Okumura K."/>
            <person name="Nagase T."/>
            <person name="Nomura N."/>
            <person name="Kikuchi H."/>
            <person name="Masuho Y."/>
            <person name="Yamashita R."/>
            <person name="Nakai K."/>
            <person name="Yada T."/>
            <person name="Nakamura Y."/>
            <person name="Ohara O."/>
            <person name="Isogai T."/>
            <person name="Sugano S."/>
        </authorList>
    </citation>
    <scope>NUCLEOTIDE SEQUENCE [LARGE SCALE MRNA] (ISOFORM 2)</scope>
</reference>
<reference key="4">
    <citation type="journal article" date="2005" name="Nature">
        <title>DNA sequence and analysis of human chromosome 18.</title>
        <authorList>
            <person name="Nusbaum C."/>
            <person name="Zody M.C."/>
            <person name="Borowsky M.L."/>
            <person name="Kamal M."/>
            <person name="Kodira C.D."/>
            <person name="Taylor T.D."/>
            <person name="Whittaker C.A."/>
            <person name="Chang J.L."/>
            <person name="Cuomo C.A."/>
            <person name="Dewar K."/>
            <person name="FitzGerald M.G."/>
            <person name="Yang X."/>
            <person name="Abouelleil A."/>
            <person name="Allen N.R."/>
            <person name="Anderson S."/>
            <person name="Bloom T."/>
            <person name="Bugalter B."/>
            <person name="Butler J."/>
            <person name="Cook A."/>
            <person name="DeCaprio D."/>
            <person name="Engels R."/>
            <person name="Garber M."/>
            <person name="Gnirke A."/>
            <person name="Hafez N."/>
            <person name="Hall J.L."/>
            <person name="Norman C.H."/>
            <person name="Itoh T."/>
            <person name="Jaffe D.B."/>
            <person name="Kuroki Y."/>
            <person name="Lehoczky J."/>
            <person name="Lui A."/>
            <person name="Macdonald P."/>
            <person name="Mauceli E."/>
            <person name="Mikkelsen T.S."/>
            <person name="Naylor J.W."/>
            <person name="Nicol R."/>
            <person name="Nguyen C."/>
            <person name="Noguchi H."/>
            <person name="O'Leary S.B."/>
            <person name="Piqani B."/>
            <person name="Smith C.L."/>
            <person name="Talamas J.A."/>
            <person name="Topham K."/>
            <person name="Totoki Y."/>
            <person name="Toyoda A."/>
            <person name="Wain H.M."/>
            <person name="Young S.K."/>
            <person name="Zeng Q."/>
            <person name="Zimmer A.R."/>
            <person name="Fujiyama A."/>
            <person name="Hattori M."/>
            <person name="Birren B.W."/>
            <person name="Sakaki Y."/>
            <person name="Lander E.S."/>
        </authorList>
    </citation>
    <scope>NUCLEOTIDE SEQUENCE [LARGE SCALE GENOMIC DNA]</scope>
</reference>
<reference key="5">
    <citation type="journal article" date="2004" name="Genome Res.">
        <title>The status, quality, and expansion of the NIH full-length cDNA project: the Mammalian Gene Collection (MGC).</title>
        <authorList>
            <consortium name="The MGC Project Team"/>
        </authorList>
    </citation>
    <scope>NUCLEOTIDE SEQUENCE [LARGE SCALE MRNA] (ISOFORM 1)</scope>
</reference>
<reference key="6">
    <citation type="journal article" date="2010" name="Sci. Signal.">
        <title>Quantitative phosphoproteomics reveals widespread full phosphorylation site occupancy during mitosis.</title>
        <authorList>
            <person name="Olsen J.V."/>
            <person name="Vermeulen M."/>
            <person name="Santamaria A."/>
            <person name="Kumar C."/>
            <person name="Miller M.L."/>
            <person name="Jensen L.J."/>
            <person name="Gnad F."/>
            <person name="Cox J."/>
            <person name="Jensen T.S."/>
            <person name="Nigg E.A."/>
            <person name="Brunak S."/>
            <person name="Mann M."/>
        </authorList>
    </citation>
    <scope>PHOSPHORYLATION [LARGE SCALE ANALYSIS] AT SER-217 AND SER-223</scope>
    <scope>IDENTIFICATION BY MASS SPECTROMETRY [LARGE SCALE ANALYSIS]</scope>
    <source>
        <tissue>Cervix carcinoma</tissue>
    </source>
</reference>
<reference key="7">
    <citation type="journal article" date="2013" name="Am. J. Hum. Genet.">
        <title>Mutations in SERPINB7, encoding a member of the serine protease inhibitor superfamily, cause Nagashima-type palmoplantar keratosis.</title>
        <authorList>
            <person name="Kubo A."/>
            <person name="Shiohama A."/>
            <person name="Sasaki T."/>
            <person name="Nakabayashi K."/>
            <person name="Kawasaki H."/>
            <person name="Atsugi T."/>
            <person name="Sato S."/>
            <person name="Shimizu A."/>
            <person name="Mikami S."/>
            <person name="Tanizaki H."/>
            <person name="Uchiyama M."/>
            <person name="Maeda T."/>
            <person name="Ito T."/>
            <person name="Sakabe J."/>
            <person name="Heike T."/>
            <person name="Okuyama T."/>
            <person name="Kosaki R."/>
            <person name="Kosaki K."/>
            <person name="Kudoh J."/>
            <person name="Hata K."/>
            <person name="Umezawa A."/>
            <person name="Tokura Y."/>
            <person name="Ishiko A."/>
            <person name="Niizeki H."/>
            <person name="Kabashima K."/>
            <person name="Mitsuhashi Y."/>
            <person name="Amagai M."/>
        </authorList>
    </citation>
    <scope>TISSUE SPECIFICITY</scope>
    <scope>INVOLVEMENT IN PPKN</scope>
</reference>
<proteinExistence type="evidence at protein level"/>
<dbReference type="EMBL" id="D88575">
    <property type="protein sequence ID" value="BAA31232.1"/>
    <property type="molecule type" value="mRNA"/>
</dbReference>
<dbReference type="EMBL" id="AF027866">
    <property type="protein sequence ID" value="AAC64506.1"/>
    <property type="molecule type" value="mRNA"/>
</dbReference>
<dbReference type="EMBL" id="AK300828">
    <property type="protein sequence ID" value="BAG62480.1"/>
    <property type="molecule type" value="mRNA"/>
</dbReference>
<dbReference type="EMBL" id="AC069356">
    <property type="status" value="NOT_ANNOTATED_CDS"/>
    <property type="molecule type" value="Genomic_DNA"/>
</dbReference>
<dbReference type="EMBL" id="AC072051">
    <property type="status" value="NOT_ANNOTATED_CDS"/>
    <property type="molecule type" value="Genomic_DNA"/>
</dbReference>
<dbReference type="EMBL" id="BC069417">
    <property type="protein sequence ID" value="AAH69417.1"/>
    <property type="molecule type" value="mRNA"/>
</dbReference>
<dbReference type="EMBL" id="BC069442">
    <property type="protein sequence ID" value="AAH69442.1"/>
    <property type="molecule type" value="mRNA"/>
</dbReference>
<dbReference type="EMBL" id="BC069547">
    <property type="protein sequence ID" value="AAH69547.1"/>
    <property type="molecule type" value="mRNA"/>
</dbReference>
<dbReference type="EMBL" id="BC106743">
    <property type="protein sequence ID" value="AAI06744.1"/>
    <property type="molecule type" value="mRNA"/>
</dbReference>
<dbReference type="EMBL" id="BC106744">
    <property type="protein sequence ID" value="AAI06745.1"/>
    <property type="molecule type" value="mRNA"/>
</dbReference>
<dbReference type="CCDS" id="CCDS11988.1">
    <molecule id="O75635-1"/>
</dbReference>
<dbReference type="CCDS" id="CCDS58633.1">
    <molecule id="O75635-2"/>
</dbReference>
<dbReference type="RefSeq" id="NP_001035237.1">
    <molecule id="O75635-1"/>
    <property type="nucleotide sequence ID" value="NM_001040147.3"/>
</dbReference>
<dbReference type="RefSeq" id="NP_001248759.1">
    <molecule id="O75635-1"/>
    <property type="nucleotide sequence ID" value="NM_001261830.2"/>
</dbReference>
<dbReference type="RefSeq" id="NP_001248760.1">
    <molecule id="O75635-2"/>
    <property type="nucleotide sequence ID" value="NM_001261831.2"/>
</dbReference>
<dbReference type="RefSeq" id="NP_003775.1">
    <molecule id="O75635-1"/>
    <property type="nucleotide sequence ID" value="NM_003784.4"/>
</dbReference>
<dbReference type="RefSeq" id="XP_024307046.1">
    <molecule id="O75635-1"/>
    <property type="nucleotide sequence ID" value="XM_024451278.1"/>
</dbReference>
<dbReference type="SMR" id="O75635"/>
<dbReference type="BioGRID" id="114252">
    <property type="interactions" value="99"/>
</dbReference>
<dbReference type="FunCoup" id="O75635">
    <property type="interactions" value="241"/>
</dbReference>
<dbReference type="IntAct" id="O75635">
    <property type="interactions" value="61"/>
</dbReference>
<dbReference type="STRING" id="9606.ENSP00000381101"/>
<dbReference type="MEROPS" id="I04.012"/>
<dbReference type="GlyGen" id="O75635">
    <property type="glycosylation" value="5 sites, 1 O-linked glycan (1 site)"/>
</dbReference>
<dbReference type="iPTMnet" id="O75635"/>
<dbReference type="PhosphoSitePlus" id="O75635"/>
<dbReference type="BioMuta" id="SERPINB7"/>
<dbReference type="jPOST" id="O75635"/>
<dbReference type="MassIVE" id="O75635"/>
<dbReference type="PaxDb" id="9606-ENSP00000381101"/>
<dbReference type="PeptideAtlas" id="O75635"/>
<dbReference type="ProteomicsDB" id="24990"/>
<dbReference type="ProteomicsDB" id="50131">
    <molecule id="O75635-1"/>
</dbReference>
<dbReference type="Pumba" id="O75635"/>
<dbReference type="Antibodypedia" id="10160">
    <property type="antibodies" value="181 antibodies from 26 providers"/>
</dbReference>
<dbReference type="DNASU" id="8710"/>
<dbReference type="Ensembl" id="ENST00000336429.6">
    <molecule id="O75635-1"/>
    <property type="protein sequence ID" value="ENSP00000337212.2"/>
    <property type="gene ID" value="ENSG00000166396.13"/>
</dbReference>
<dbReference type="Ensembl" id="ENST00000398019.7">
    <molecule id="O75635-1"/>
    <property type="protein sequence ID" value="ENSP00000381101.2"/>
    <property type="gene ID" value="ENSG00000166396.13"/>
</dbReference>
<dbReference type="Ensembl" id="ENST00000540675.5">
    <molecule id="O75635-2"/>
    <property type="protein sequence ID" value="ENSP00000444572.1"/>
    <property type="gene ID" value="ENSG00000166396.13"/>
</dbReference>
<dbReference type="Ensembl" id="ENST00000546027.5">
    <molecule id="O75635-1"/>
    <property type="protein sequence ID" value="ENSP00000444861.1"/>
    <property type="gene ID" value="ENSG00000166396.13"/>
</dbReference>
<dbReference type="GeneID" id="8710"/>
<dbReference type="KEGG" id="hsa:8710"/>
<dbReference type="MANE-Select" id="ENST00000398019.7">
    <property type="protein sequence ID" value="ENSP00000381101.2"/>
    <property type="RefSeq nucleotide sequence ID" value="NM_003784.4"/>
    <property type="RefSeq protein sequence ID" value="NP_003775.1"/>
</dbReference>
<dbReference type="UCSC" id="uc002ljl.4">
    <molecule id="O75635-1"/>
    <property type="organism name" value="human"/>
</dbReference>
<dbReference type="AGR" id="HGNC:13902"/>
<dbReference type="CTD" id="8710"/>
<dbReference type="DisGeNET" id="8710"/>
<dbReference type="GeneCards" id="SERPINB7"/>
<dbReference type="HGNC" id="HGNC:13902">
    <property type="gene designation" value="SERPINB7"/>
</dbReference>
<dbReference type="HPA" id="ENSG00000166396">
    <property type="expression patterns" value="Group enriched (lymphoid tissue, skin)"/>
</dbReference>
<dbReference type="MalaCards" id="SERPINB7"/>
<dbReference type="MIM" id="603357">
    <property type="type" value="gene"/>
</dbReference>
<dbReference type="MIM" id="615598">
    <property type="type" value="phenotype"/>
</dbReference>
<dbReference type="neXtProt" id="NX_O75635"/>
<dbReference type="OpenTargets" id="ENSG00000166396"/>
<dbReference type="Orphanet" id="140966">
    <property type="disease" value="Palmoplantar keratoderma, Nagashima type"/>
</dbReference>
<dbReference type="PharmGKB" id="PA37825"/>
<dbReference type="VEuPathDB" id="HostDB:ENSG00000166396"/>
<dbReference type="eggNOG" id="KOG2392">
    <property type="taxonomic scope" value="Eukaryota"/>
</dbReference>
<dbReference type="GeneTree" id="ENSGT00940000161520"/>
<dbReference type="HOGENOM" id="CLU_023330_0_2_1"/>
<dbReference type="InParanoid" id="O75635"/>
<dbReference type="OMA" id="LMHQERK"/>
<dbReference type="OrthoDB" id="9518664at2759"/>
<dbReference type="PAN-GO" id="O75635">
    <property type="GO annotations" value="3 GO annotations based on evolutionary models"/>
</dbReference>
<dbReference type="PhylomeDB" id="O75635"/>
<dbReference type="TreeFam" id="TF352619"/>
<dbReference type="PathwayCommons" id="O75635"/>
<dbReference type="SignaLink" id="O75635"/>
<dbReference type="BioGRID-ORCS" id="8710">
    <property type="hits" value="8 hits in 1145 CRISPR screens"/>
</dbReference>
<dbReference type="GeneWiki" id="SERPINB7"/>
<dbReference type="GenomeRNAi" id="8710"/>
<dbReference type="Pharos" id="O75635">
    <property type="development level" value="Tbio"/>
</dbReference>
<dbReference type="PRO" id="PR:O75635"/>
<dbReference type="Proteomes" id="UP000005640">
    <property type="component" value="Chromosome 18"/>
</dbReference>
<dbReference type="RNAct" id="O75635">
    <property type="molecule type" value="protein"/>
</dbReference>
<dbReference type="Bgee" id="ENSG00000166396">
    <property type="expression patterns" value="Expressed in upper arm skin and 98 other cell types or tissues"/>
</dbReference>
<dbReference type="ExpressionAtlas" id="O75635">
    <property type="expression patterns" value="baseline and differential"/>
</dbReference>
<dbReference type="GO" id="GO:0005737">
    <property type="term" value="C:cytoplasm"/>
    <property type="evidence" value="ECO:0007669"/>
    <property type="project" value="UniProtKB-SubCell"/>
</dbReference>
<dbReference type="GO" id="GO:0005615">
    <property type="term" value="C:extracellular space"/>
    <property type="evidence" value="ECO:0000318"/>
    <property type="project" value="GO_Central"/>
</dbReference>
<dbReference type="GO" id="GO:0004867">
    <property type="term" value="F:serine-type endopeptidase inhibitor activity"/>
    <property type="evidence" value="ECO:0000318"/>
    <property type="project" value="GO_Central"/>
</dbReference>
<dbReference type="GO" id="GO:0032967">
    <property type="term" value="P:positive regulation of collagen biosynthetic process"/>
    <property type="evidence" value="ECO:0007669"/>
    <property type="project" value="Ensembl"/>
</dbReference>
<dbReference type="GO" id="GO:0072126">
    <property type="term" value="P:positive regulation of glomerular mesangial cell proliferation"/>
    <property type="evidence" value="ECO:0007669"/>
    <property type="project" value="Ensembl"/>
</dbReference>
<dbReference type="GO" id="GO:0090362">
    <property type="term" value="P:positive regulation of platelet-derived growth factor production"/>
    <property type="evidence" value="ECO:0007669"/>
    <property type="project" value="Ensembl"/>
</dbReference>
<dbReference type="GO" id="GO:0032914">
    <property type="term" value="P:positive regulation of transforming growth factor beta1 production"/>
    <property type="evidence" value="ECO:0007669"/>
    <property type="project" value="Ensembl"/>
</dbReference>
<dbReference type="CDD" id="cd19566">
    <property type="entry name" value="serpinB7_megsin"/>
    <property type="match status" value="1"/>
</dbReference>
<dbReference type="FunFam" id="2.30.39.10:FF:000001">
    <property type="entry name" value="Serpin family B member 2"/>
    <property type="match status" value="1"/>
</dbReference>
<dbReference type="FunFam" id="3.30.497.10:FF:000015">
    <property type="entry name" value="Serpin family B member 7"/>
    <property type="match status" value="1"/>
</dbReference>
<dbReference type="Gene3D" id="2.30.39.10">
    <property type="entry name" value="Alpha-1-antitrypsin, domain 1"/>
    <property type="match status" value="1"/>
</dbReference>
<dbReference type="Gene3D" id="3.30.497.10">
    <property type="entry name" value="Antithrombin, subunit I, domain 2"/>
    <property type="match status" value="1"/>
</dbReference>
<dbReference type="InterPro" id="IPR023795">
    <property type="entry name" value="Serpin_CS"/>
</dbReference>
<dbReference type="InterPro" id="IPR023796">
    <property type="entry name" value="Serpin_dom"/>
</dbReference>
<dbReference type="InterPro" id="IPR000215">
    <property type="entry name" value="Serpin_fam"/>
</dbReference>
<dbReference type="InterPro" id="IPR036186">
    <property type="entry name" value="Serpin_sf"/>
</dbReference>
<dbReference type="InterPro" id="IPR042178">
    <property type="entry name" value="Serpin_sf_1"/>
</dbReference>
<dbReference type="InterPro" id="IPR042185">
    <property type="entry name" value="Serpin_sf_2"/>
</dbReference>
<dbReference type="PANTHER" id="PTHR11461">
    <property type="entry name" value="SERINE PROTEASE INHIBITOR, SERPIN"/>
    <property type="match status" value="1"/>
</dbReference>
<dbReference type="PANTHER" id="PTHR11461:SF56">
    <property type="entry name" value="SERPIN B7"/>
    <property type="match status" value="1"/>
</dbReference>
<dbReference type="Pfam" id="PF00079">
    <property type="entry name" value="Serpin"/>
    <property type="match status" value="1"/>
</dbReference>
<dbReference type="SMART" id="SM00093">
    <property type="entry name" value="SERPIN"/>
    <property type="match status" value="1"/>
</dbReference>
<dbReference type="SUPFAM" id="SSF56574">
    <property type="entry name" value="Serpins"/>
    <property type="match status" value="1"/>
</dbReference>
<dbReference type="PROSITE" id="PS00284">
    <property type="entry name" value="SERPIN"/>
    <property type="match status" value="1"/>
</dbReference>
<comment type="function">
    <text>Might function as an inhibitor of Lys-specific proteases. Might influence the maturation of megakaryocytes via its action as a serpin.</text>
</comment>
<comment type="subcellular location">
    <subcellularLocation>
        <location evidence="1">Cytoplasm</location>
    </subcellularLocation>
</comment>
<comment type="alternative products">
    <event type="alternative splicing"/>
    <isoform>
        <id>O75635-1</id>
        <name>1</name>
        <sequence type="displayed"/>
    </isoform>
    <isoform>
        <id>O75635-2</id>
        <name>2</name>
        <sequence type="described" ref="VSP_044711"/>
    </isoform>
</comment>
<comment type="tissue specificity">
    <text evidence="2">Predominantly expressed in mesangial cells. Expressed in the epidermis of the whole body.</text>
</comment>
<comment type="disease" evidence="2">
    <disease id="DI-04005">
        <name>Keratoderma, palmoplantar, Nagashima type</name>
        <acronym>PPKN</acronym>
        <description>An autosomal recessive, non-syndromic, diffuse palmoplantar keratosis characterized by well-demarcated diffuse erythematous hyperkeratosis expanding onto the dorsal surfaces of the palms and feet and the Achilles tendon area. Hyperkeratosis is mild and non-progressive.</description>
        <dbReference type="MIM" id="615598"/>
    </disease>
    <text>The disease is caused by variants affecting the gene represented in this entry.</text>
</comment>
<comment type="similarity">
    <text evidence="4">Belongs to the serpin family. Ov-serpin subfamily.</text>
</comment>
<sequence>MASLAAANAEFCFNLFREMDDNQGNGNVFFSSLSLFAALALVRLGAQDDSLSQIDKLLHVNTASGYGNSSNSQSGLQSQLKRVFSDINASHKDYDLSIVNGLFAEKVYGFHKDYIECAEKLYDAKVERVDFTNHLEDTRRNINKWVENETHGKIKNVIGEGGISSSAVMVLVNAVYFKGKWQSAFTKSETINCHFKSPKCSGKAVAMMHQERKFNLSVIEDPSMKILELRYNGGINMYVLLPENDLSEIENKLTFQNLMEWTNPRRMTSKYVEVFFPQFKIEKNYEMKQYLRALGLKDIFDESKADLSGIASGGRLYISRMMHKSYIEVTEEGTEATAATGSNIVEKQLPQSTLFRADHPFLFVIRKDDIILFSGKVSCP</sequence>